<name>NBAS_HUMAN</name>
<keyword id="KW-0007">Acetylation</keyword>
<keyword id="KW-0025">Alternative splicing</keyword>
<keyword id="KW-0963">Cytoplasm</keyword>
<keyword id="KW-0225">Disease variant</keyword>
<keyword id="KW-0242">Dwarfism</keyword>
<keyword id="KW-0256">Endoplasmic reticulum</keyword>
<keyword id="KW-0472">Membrane</keyword>
<keyword id="KW-0597">Phosphoprotein</keyword>
<keyword id="KW-0653">Protein transport</keyword>
<keyword id="KW-1267">Proteomics identification</keyword>
<keyword id="KW-1185">Reference proteome</keyword>
<keyword id="KW-0677">Repeat</keyword>
<keyword id="KW-0813">Transport</keyword>
<keyword id="KW-0853">WD repeat</keyword>
<feature type="chain" id="PRO_0000292806" description="NBAS subunit of NRZ tethering complex">
    <location>
        <begin position="1"/>
        <end position="2371"/>
    </location>
</feature>
<feature type="repeat" description="WD 1">
    <location>
        <begin position="130"/>
        <end position="169"/>
    </location>
</feature>
<feature type="repeat" description="WD 2">
    <location>
        <begin position="316"/>
        <end position="355"/>
    </location>
</feature>
<feature type="region of interest" description="Interaction with USE1" evidence="6">
    <location>
        <begin position="1"/>
        <end position="1035"/>
    </location>
</feature>
<feature type="region of interest" description="Interaction with ZW10 and RINT1" evidence="6 7">
    <location>
        <begin position="1036"/>
        <end position="2371"/>
    </location>
</feature>
<feature type="modified residue" description="Phosphoserine" evidence="22 24 25 26 27">
    <location>
        <position position="473"/>
    </location>
</feature>
<feature type="modified residue" description="Phosphoserine" evidence="22 24 25 27">
    <location>
        <position position="475"/>
    </location>
</feature>
<feature type="modified residue" description="N6-acetyllysine" evidence="23">
    <location>
        <position position="1057"/>
    </location>
</feature>
<feature type="splice variant" id="VSP_026445" description="In isoform 2." evidence="18">
    <location>
        <begin position="860"/>
        <end position="979"/>
    </location>
</feature>
<feature type="sequence variant" id="VAR_068954" description="In dbSNP:rs77081203." evidence="8">
    <original>Q</original>
    <variation>E</variation>
    <location>
        <position position="44"/>
    </location>
</feature>
<feature type="sequence variant" id="VAR_074643" description="Found in patients with a multisystem disease involving liver, eye, immune system, connective tissue and bone; likely pathogenic." evidence="10">
    <original>A</original>
    <variation>V</variation>
    <location>
        <position position="95"/>
    </location>
</feature>
<feature type="sequence variant" id="VAR_074644" description="Found in patients with a multisystem disease involving liver, eye, immune system, connective tissue and bone; likely pathogenic; dbSNP:rs368085185." evidence="10">
    <original>R</original>
    <variation>W</variation>
    <location>
        <position position="137"/>
    </location>
</feature>
<feature type="sequence variant" id="VAR_074645" description="In ILFS2." evidence="9">
    <location>
        <position position="187"/>
    </location>
</feature>
<feature type="sequence variant" id="VAR_085212" description="In ILFS2; uncertain significance; dbSNP:rs1131692171." evidence="13">
    <location>
        <begin position="197"/>
        <end position="2371"/>
    </location>
</feature>
<feature type="sequence variant" id="VAR_074646" description="In ILFS2." evidence="9">
    <location>
        <position position="202"/>
    </location>
</feature>
<feature type="sequence variant" id="VAR_085213" description="In ILFS2; uncertain significance; dbSNP:rs748880753." evidence="12">
    <original>H</original>
    <variation>P</variation>
    <location>
        <position position="227"/>
    </location>
</feature>
<feature type="sequence variant" id="VAR_057611" description="In dbSNP:rs13029846." evidence="5">
    <original>I</original>
    <variation>V</variation>
    <location>
        <position position="243"/>
    </location>
</feature>
<feature type="sequence variant" id="VAR_074647" description="In ILFS2." evidence="9">
    <original>P</original>
    <variation>S</variation>
    <location>
        <position position="348"/>
    </location>
</feature>
<feature type="sequence variant" id="VAR_074648" description="Found in patients with a multisystem disease involving liver, eye, immune system, connective tissue and bone; likely pathogenic; dbSNP:rs1680168518." evidence="10">
    <original>W</original>
    <variation>R</variation>
    <location>
        <position position="396"/>
    </location>
</feature>
<feature type="sequence variant" id="VAR_085214" description="Found in a patient with a multisystem disease involving liver, eye, immune system, connective tissue and bone; uncertain significance; dbSNP:rs759960319." evidence="14">
    <location>
        <begin position="501"/>
        <end position="2371"/>
    </location>
</feature>
<feature type="sequence variant" id="VAR_085215" description="In ILFS2; uncertain significance; dbSNP:rs770446752." evidence="12">
    <location>
        <begin position="583"/>
        <end position="2371"/>
    </location>
</feature>
<feature type="sequence variant" id="VAR_057612" description="In dbSNP:rs4668909." evidence="3 5">
    <original>K</original>
    <variation>R</variation>
    <location>
        <position position="655"/>
    </location>
</feature>
<feature type="sequence variant" id="VAR_085216" description="Found in a patient with a multisystem disease involving liver, eye, immune system, connective tissue and bone; uncertain significance; reduced protein expression levels in fibroblasts." evidence="11">
    <location>
        <begin position="678"/>
        <end position="2371"/>
    </location>
</feature>
<feature type="sequence variant" id="VAR_074649" description="In ILFS2." evidence="9">
    <original>P</original>
    <variation>H</variation>
    <location>
        <position position="777"/>
    </location>
</feature>
<feature type="sequence variant" id="VAR_085217" description="In ILFS2; uncertain significance; dbSNP:rs781408707." evidence="13">
    <original>E</original>
    <variation>K</variation>
    <location>
        <position position="803"/>
    </location>
</feature>
<feature type="sequence variant" id="VAR_074650" description="In ILFS2; dbSNP:rs1085307944." evidence="9">
    <original>V</original>
    <variation>F</variation>
    <location>
        <position position="842"/>
    </location>
</feature>
<feature type="sequence variant" id="VAR_074651" description="In ILFS2; uncertain significance; dbSNP:rs368196005." evidence="9 15">
    <original>L</original>
    <variation>R</variation>
    <location>
        <position position="903"/>
    </location>
</feature>
<feature type="sequence variant" id="VAR_085218" description="In ILFS2; uncertain significance; dbSNP:rs781766556." evidence="15">
    <original>R</original>
    <variation>H</variation>
    <location>
        <position position="941"/>
    </location>
</feature>
<feature type="sequence variant" id="VAR_068955" description="In dbSNP:rs74727069." evidence="8">
    <original>V</original>
    <variation>L</variation>
    <location>
        <position position="949"/>
    </location>
</feature>
<feature type="sequence variant" id="VAR_074652" description="In ILFS2; dbSNP:rs140841721." evidence="9">
    <original>I</original>
    <variation>S</variation>
    <location>
        <position position="984"/>
    </location>
</feature>
<feature type="sequence variant" id="VAR_085219" description="Found in a patient with a multisystem disease involving liver, eye, immune system, connective tissue and bone; uncertain significance; reduced collagen secretion, diffuse collagen bundles and reduced protein expression in fibroblasts; dbSNP:rs780108348." evidence="11">
    <location>
        <begin position="1004"/>
        <end position="2371"/>
    </location>
</feature>
<feature type="sequence variant" id="VAR_057613" description="In dbSNP:rs16862653.">
    <original>R</original>
    <variation>Q</variation>
    <location>
        <position position="1004"/>
    </location>
</feature>
<feature type="sequence variant" id="VAR_068956" description="In dbSNP:rs74411619." evidence="8">
    <original>C</original>
    <variation>S</variation>
    <location>
        <position position="1009"/>
    </location>
</feature>
<feature type="sequence variant" id="VAR_074653" description="In ILFS2; dbSNP:rs796052121." evidence="9">
    <original>L</original>
    <variation>P</variation>
    <location>
        <position position="1055"/>
    </location>
</feature>
<feature type="sequence variant" id="VAR_057614" description="In dbSNP:rs35770368.">
    <original>S</original>
    <variation>N</variation>
    <location>
        <position position="1178"/>
    </location>
</feature>
<feature type="sequence variant" id="VAR_085220" description="In ILFS2; uncertain significance; dbSNP:rs779982692." evidence="13">
    <original>C</original>
    <variation>Y</variation>
    <location>
        <position position="1199"/>
    </location>
</feature>
<feature type="sequence variant" id="VAR_068957" description="In SOPH; uncertain significance; also found in patients with a multisystem disease involving liver, eye, immune system, connective tissue and bone; uncertain significance; reduced collagen secretion, diffuse collagen bundles and reduced protein expression in fibroblasts.; dbSNP:rs369698072." evidence="8 11">
    <original>R</original>
    <variation>H</variation>
    <location>
        <position position="1914"/>
    </location>
</feature>
<feature type="sequence variant" id="VAR_057615" description="In dbSNP:rs6710817." evidence="4">
    <original>A</original>
    <variation>T</variation>
    <location>
        <position position="2074"/>
    </location>
</feature>
<feature type="sequence conflict" description="In Ref. 1; AAM93544." evidence="20" ref="1">
    <original>I</original>
    <variation>T</variation>
    <location>
        <position position="22"/>
    </location>
</feature>
<feature type="sequence conflict" description="In Ref. 1; AAM93544." evidence="20" ref="1">
    <original>K</original>
    <variation>E</variation>
    <location>
        <position position="533"/>
    </location>
</feature>
<feature type="sequence conflict" description="In Ref. 1; AAM93544." evidence="20" ref="1">
    <original>F</original>
    <variation>L</variation>
    <location>
        <position position="745"/>
    </location>
</feature>
<feature type="sequence conflict" description="In Ref. 1; AAM93544." evidence="20" ref="1">
    <original>M</original>
    <variation>T</variation>
    <location>
        <position position="1102"/>
    </location>
</feature>
<feature type="sequence conflict" description="In Ref. 4; AAD18133." evidence="20" ref="4">
    <original>K</original>
    <variation>E</variation>
    <location>
        <position position="1229"/>
    </location>
</feature>
<feature type="sequence conflict" description="In Ref. 1; AAM93544." evidence="20" ref="1">
    <original>E</original>
    <variation>G</variation>
    <location>
        <position position="1277"/>
    </location>
</feature>
<feature type="sequence conflict" description="In Ref. 1; AAM93544." evidence="20" ref="1">
    <original>H</original>
    <variation>Y</variation>
    <location>
        <position position="1784"/>
    </location>
</feature>
<feature type="sequence conflict" description="In Ref. 1; AAM93544." evidence="20" ref="1">
    <original>G</original>
    <variation>S</variation>
    <location>
        <position position="1797"/>
    </location>
</feature>
<feature type="sequence conflict" description="In Ref. 1; AAM93544." evidence="20" ref="1">
    <original>L</original>
    <variation>S</variation>
    <location>
        <position position="1854"/>
    </location>
</feature>
<feature type="sequence conflict" description="In Ref. 4; AAD18133." evidence="20" ref="4">
    <original>E</original>
    <variation>D</variation>
    <location>
        <position position="1997"/>
    </location>
</feature>
<feature type="sequence conflict" description="In Ref. 4; AAD18133." evidence="20" ref="4">
    <original>P</original>
    <variation>L</variation>
    <location>
        <position position="2028"/>
    </location>
</feature>
<feature type="sequence conflict" description="In Ref. 4; AAD18133." evidence="20" ref="4">
    <original>D</original>
    <variation>N</variation>
    <location>
        <position position="2030"/>
    </location>
</feature>
<feature type="sequence conflict" description="In Ref. 4; AAD18133." evidence="20" ref="4">
    <original>P</original>
    <variation>T</variation>
    <location>
        <position position="2033"/>
    </location>
</feature>
<feature type="sequence conflict" description="In Ref. 4; AAD18133." evidence="20" ref="4">
    <original>A</original>
    <variation>T</variation>
    <location>
        <position position="2171"/>
    </location>
</feature>
<dbReference type="EMBL" id="AF388385">
    <property type="protein sequence ID" value="AAM93544.1"/>
    <property type="molecule type" value="mRNA"/>
</dbReference>
<dbReference type="EMBL" id="AC007738">
    <property type="status" value="NOT_ANNOTATED_CDS"/>
    <property type="molecule type" value="Genomic_DNA"/>
</dbReference>
<dbReference type="EMBL" id="AC074184">
    <property type="status" value="NOT_ANNOTATED_CDS"/>
    <property type="molecule type" value="Genomic_DNA"/>
</dbReference>
<dbReference type="EMBL" id="AC008278">
    <property type="status" value="NOT_ANNOTATED_CDS"/>
    <property type="molecule type" value="Genomic_DNA"/>
</dbReference>
<dbReference type="EMBL" id="AC008282">
    <property type="protein sequence ID" value="AAY24347.1"/>
    <property type="molecule type" value="Genomic_DNA"/>
</dbReference>
<dbReference type="EMBL" id="BC051792">
    <property type="protein sequence ID" value="AAH51792.2"/>
    <property type="molecule type" value="mRNA"/>
</dbReference>
<dbReference type="EMBL" id="BC108693">
    <property type="protein sequence ID" value="AAI08694.1"/>
    <property type="status" value="ALT_TERM"/>
    <property type="molecule type" value="mRNA"/>
</dbReference>
<dbReference type="EMBL" id="BC131735">
    <property type="protein sequence ID" value="AAI31736.1"/>
    <property type="molecule type" value="mRNA"/>
</dbReference>
<dbReference type="EMBL" id="AF056195">
    <property type="protein sequence ID" value="AAD18133.1"/>
    <property type="status" value="ALT_SEQ"/>
    <property type="molecule type" value="mRNA"/>
</dbReference>
<dbReference type="EMBL" id="AL050281">
    <property type="protein sequence ID" value="CAB43382.1"/>
    <property type="status" value="ALT_INIT"/>
    <property type="molecule type" value="mRNA"/>
</dbReference>
<dbReference type="CCDS" id="CCDS1685.1">
    <molecule id="A2RRP1-1"/>
</dbReference>
<dbReference type="PIR" id="T13150">
    <property type="entry name" value="T13150"/>
</dbReference>
<dbReference type="RefSeq" id="NP_056993.2">
    <molecule id="A2RRP1-1"/>
    <property type="nucleotide sequence ID" value="NM_015909.3"/>
</dbReference>
<dbReference type="BioGRID" id="119627">
    <property type="interactions" value="126"/>
</dbReference>
<dbReference type="ComplexPortal" id="CPX-6201">
    <property type="entry name" value="NRZ tethering complex"/>
</dbReference>
<dbReference type="CORUM" id="A2RRP1"/>
<dbReference type="DIP" id="DIP-56726N"/>
<dbReference type="FunCoup" id="A2RRP1">
    <property type="interactions" value="3531"/>
</dbReference>
<dbReference type="IntAct" id="A2RRP1">
    <property type="interactions" value="55"/>
</dbReference>
<dbReference type="STRING" id="9606.ENSP00000281513"/>
<dbReference type="GlyGen" id="A2RRP1">
    <property type="glycosylation" value="2 sites, 1 O-linked glycan (1 site)"/>
</dbReference>
<dbReference type="iPTMnet" id="A2RRP1"/>
<dbReference type="MetOSite" id="A2RRP1"/>
<dbReference type="PhosphoSitePlus" id="A2RRP1"/>
<dbReference type="SwissPalm" id="A2RRP1"/>
<dbReference type="BioMuta" id="NBAS"/>
<dbReference type="jPOST" id="A2RRP1"/>
<dbReference type="MassIVE" id="A2RRP1"/>
<dbReference type="PaxDb" id="9606-ENSP00000281513"/>
<dbReference type="PeptideAtlas" id="A2RRP1"/>
<dbReference type="ProteomicsDB" id="478">
    <molecule id="A2RRP1-1"/>
</dbReference>
<dbReference type="ProteomicsDB" id="479">
    <molecule id="A2RRP1-2"/>
</dbReference>
<dbReference type="Pumba" id="A2RRP1"/>
<dbReference type="Antibodypedia" id="26924">
    <property type="antibodies" value="85 antibodies from 25 providers"/>
</dbReference>
<dbReference type="DNASU" id="51594"/>
<dbReference type="Ensembl" id="ENST00000281513.10">
    <molecule id="A2RRP1-1"/>
    <property type="protein sequence ID" value="ENSP00000281513.5"/>
    <property type="gene ID" value="ENSG00000151779.14"/>
</dbReference>
<dbReference type="GeneID" id="51594"/>
<dbReference type="KEGG" id="hsa:51594"/>
<dbReference type="MANE-Select" id="ENST00000281513.10">
    <property type="protein sequence ID" value="ENSP00000281513.5"/>
    <property type="RefSeq nucleotide sequence ID" value="NM_015909.4"/>
    <property type="RefSeq protein sequence ID" value="NP_056993.2"/>
</dbReference>
<dbReference type="UCSC" id="uc002rcc.3">
    <molecule id="A2RRP1-1"/>
    <property type="organism name" value="human"/>
</dbReference>
<dbReference type="AGR" id="HGNC:15625"/>
<dbReference type="CTD" id="51594"/>
<dbReference type="DisGeNET" id="51594"/>
<dbReference type="GeneCards" id="NBAS"/>
<dbReference type="HGNC" id="HGNC:15625">
    <property type="gene designation" value="NBAS"/>
</dbReference>
<dbReference type="HPA" id="ENSG00000151779">
    <property type="expression patterns" value="Low tissue specificity"/>
</dbReference>
<dbReference type="MalaCards" id="NBAS"/>
<dbReference type="MIM" id="608025">
    <property type="type" value="gene"/>
</dbReference>
<dbReference type="MIM" id="614800">
    <property type="type" value="phenotype"/>
</dbReference>
<dbReference type="MIM" id="616483">
    <property type="type" value="phenotype"/>
</dbReference>
<dbReference type="neXtProt" id="NX_A2RRP1"/>
<dbReference type="OpenTargets" id="ENSG00000151779"/>
<dbReference type="Orphanet" id="464724">
    <property type="disease" value="Fever-associated acute infantile liver failure syndrome"/>
</dbReference>
<dbReference type="Orphanet" id="391677">
    <property type="disease" value="Short stature-optic atrophy-Pelger-Huet anomaly syndrome"/>
</dbReference>
<dbReference type="PharmGKB" id="PA164723457"/>
<dbReference type="VEuPathDB" id="HostDB:ENSG00000151779"/>
<dbReference type="eggNOG" id="KOG1797">
    <property type="taxonomic scope" value="Eukaryota"/>
</dbReference>
<dbReference type="GeneTree" id="ENSGT00390000012474"/>
<dbReference type="HOGENOM" id="CLU_001315_0_0_1"/>
<dbReference type="InParanoid" id="A2RRP1"/>
<dbReference type="OMA" id="KHMLPAE"/>
<dbReference type="OrthoDB" id="19988at2759"/>
<dbReference type="PAN-GO" id="A2RRP1">
    <property type="GO annotations" value="4 GO annotations based on evolutionary models"/>
</dbReference>
<dbReference type="PhylomeDB" id="A2RRP1"/>
<dbReference type="TreeFam" id="TF313901"/>
<dbReference type="PathwayCommons" id="A2RRP1"/>
<dbReference type="Reactome" id="R-HSA-6811434">
    <property type="pathway name" value="COPI-dependent Golgi-to-ER retrograde traffic"/>
</dbReference>
<dbReference type="SignaLink" id="A2RRP1"/>
<dbReference type="SIGNOR" id="A2RRP1"/>
<dbReference type="BioGRID-ORCS" id="51594">
    <property type="hits" value="458 hits in 1164 CRISPR screens"/>
</dbReference>
<dbReference type="ChiTaRS" id="NBAS">
    <property type="organism name" value="human"/>
</dbReference>
<dbReference type="GenomeRNAi" id="51594"/>
<dbReference type="Pharos" id="A2RRP1">
    <property type="development level" value="Tbio"/>
</dbReference>
<dbReference type="PRO" id="PR:A2RRP1"/>
<dbReference type="Proteomes" id="UP000005640">
    <property type="component" value="Chromosome 2"/>
</dbReference>
<dbReference type="RNAct" id="A2RRP1">
    <property type="molecule type" value="protein"/>
</dbReference>
<dbReference type="Bgee" id="ENSG00000151779">
    <property type="expression patterns" value="Expressed in calcaneal tendon and 199 other cell types or tissues"/>
</dbReference>
<dbReference type="ExpressionAtlas" id="A2RRP1">
    <property type="expression patterns" value="baseline and differential"/>
</dbReference>
<dbReference type="GO" id="GO:0005829">
    <property type="term" value="C:cytosol"/>
    <property type="evidence" value="ECO:0000304"/>
    <property type="project" value="Reactome"/>
</dbReference>
<dbReference type="GO" id="GO:0070939">
    <property type="term" value="C:Dsl1/NZR complex"/>
    <property type="evidence" value="ECO:0000314"/>
    <property type="project" value="UniProtKB"/>
</dbReference>
<dbReference type="GO" id="GO:0005783">
    <property type="term" value="C:endoplasmic reticulum"/>
    <property type="evidence" value="ECO:0000314"/>
    <property type="project" value="UniProtKB"/>
</dbReference>
<dbReference type="GO" id="GO:0005789">
    <property type="term" value="C:endoplasmic reticulum membrane"/>
    <property type="evidence" value="ECO:0007669"/>
    <property type="project" value="UniProtKB-SubCell"/>
</dbReference>
<dbReference type="GO" id="GO:0016020">
    <property type="term" value="C:membrane"/>
    <property type="evidence" value="ECO:0007005"/>
    <property type="project" value="UniProtKB"/>
</dbReference>
<dbReference type="GO" id="GO:0000149">
    <property type="term" value="F:SNARE binding"/>
    <property type="evidence" value="ECO:0000314"/>
    <property type="project" value="UniProtKB"/>
</dbReference>
<dbReference type="GO" id="GO:2000623">
    <property type="term" value="P:negative regulation of nuclear-transcribed mRNA catabolic process, nonsense-mediated decay"/>
    <property type="evidence" value="ECO:0000315"/>
    <property type="project" value="UniProtKB"/>
</dbReference>
<dbReference type="GO" id="GO:0000956">
    <property type="term" value="P:nuclear-transcribed mRNA catabolic process"/>
    <property type="evidence" value="ECO:0000315"/>
    <property type="project" value="UniProtKB"/>
</dbReference>
<dbReference type="GO" id="GO:0015031">
    <property type="term" value="P:protein transport"/>
    <property type="evidence" value="ECO:0007669"/>
    <property type="project" value="UniProtKB-KW"/>
</dbReference>
<dbReference type="GO" id="GO:0006890">
    <property type="term" value="P:retrograde vesicle-mediated transport, Golgi to endoplasmic reticulum"/>
    <property type="evidence" value="ECO:0000315"/>
    <property type="project" value="UniProtKB"/>
</dbReference>
<dbReference type="Gene3D" id="2.130.10.10">
    <property type="entry name" value="YVTN repeat-like/Quinoprotein amine dehydrogenase"/>
    <property type="match status" value="1"/>
</dbReference>
<dbReference type="InterPro" id="IPR054751">
    <property type="entry name" value="NBAS_C"/>
</dbReference>
<dbReference type="InterPro" id="IPR029145">
    <property type="entry name" value="NBAS_N"/>
</dbReference>
<dbReference type="InterPro" id="IPR011044">
    <property type="entry name" value="Quino_amine_DH_bsu"/>
</dbReference>
<dbReference type="InterPro" id="IPR013244">
    <property type="entry name" value="Sec39_domain"/>
</dbReference>
<dbReference type="InterPro" id="IPR015943">
    <property type="entry name" value="WD40/YVTN_repeat-like_dom_sf"/>
</dbReference>
<dbReference type="PANTHER" id="PTHR15922:SF2">
    <property type="entry name" value="NBAS SUBUNIT OF NRZ TETHERING COMPLEX"/>
    <property type="match status" value="1"/>
</dbReference>
<dbReference type="PANTHER" id="PTHR15922">
    <property type="entry name" value="NEUROBLASTOMA-AMPLIFIED SEQUENCE"/>
    <property type="match status" value="1"/>
</dbReference>
<dbReference type="Pfam" id="PF22913">
    <property type="entry name" value="NBAS_11th"/>
    <property type="match status" value="1"/>
</dbReference>
<dbReference type="Pfam" id="PF15492">
    <property type="entry name" value="Nbas_N"/>
    <property type="match status" value="1"/>
</dbReference>
<dbReference type="Pfam" id="PF08314">
    <property type="entry name" value="Sec39"/>
    <property type="match status" value="1"/>
</dbReference>
<dbReference type="SUPFAM" id="SSF50969">
    <property type="entry name" value="YVTN repeat-like/Quinoprotein amine dehydrogenase"/>
    <property type="match status" value="1"/>
</dbReference>
<sequence length="2371" mass="268571">MAAPESGPALSPGTAEGEEETILYDLLVNTEWPPETEVQPRGNQKHGASFIITKAIRDRLLFLRQYIWYSPAPFLLPDGLVRLVNKQINWHLVLASNGKLLAAVQDQCVEIRSAKDDFTSIIGKCQVPKDPKPQWRRVAWSYDCTLLAYAESTGTVRVFDLMGSELFVISPASSFIGDLSYAIAGLIFLEYKASAQWSAELLVINYRGELRSYLVSVGTNQSYQESHCFSFSSHYPHGINTAIYHPGHRLLLVGGCETAEVGMSKASSCGLSAWRVLSGSPYYKQVTNGGDGVTAVPKTLGLLRMLSVKFYSRQGQEQDGIFKMSLSPDGMLLAAIHFSGKLSIWAIPSLKQQGEWGQNEQPGYDDLNPDWRLSTEKRKKIKDKESFYPLIDVNWWADSAVTLARCSGALTVSSVKTLKNLLGKSCEWFEPSPQVTATHDGGFLSLECEIKLAPKRSRLETRAGEEDEGEEDSDSDYEISAKARYFGYIKQGLYLVTEMERFAPPRKRPRTITKNYRLVSLRSTTPEELYQRKIESEEYEEALSLAHTYGLDTDLVYQRQWRKSAVNVASIQNYLSKIKKRSWVLHECLERVPENVDAAKELLQYGLKGTDLEALLAIGKGADDGRFTLPGEIDIDSISYEELSPPDEEPAKNKKEKELKKRQELLKLVNFSKLTLEQKELCRCRRKLLTYLDRLATYEEILGVPHASEQRYDAEFFKKFRNQNIVLSARTYAQESNVQALEILFTYHGSDLLPHRLAILSNFPETTSPHEYSVLLPEACFNGDSLMIIPWHEHKHRAKDWCEELACRMVVEPNLQDESEFLYAAQPELLRFRMTQLTVEKVMDWYQTRAEEIEHYARQVDCALSLIRLGMERNIPGLLVLCDNLVTLETLVYEARCDVTLTLKELQQMKDIEKLRLLMNSCSEDKYVTSAYQWMVPFLHRCEKQSPGVANELLKEYLVTLAKGDLKFPLKIFQHSKPDLQQKIIPDQDQLMAIALECIYTCERNDQLCLCYDLLECLPERGYGDKTEATTKLHDMVDQLEQILSVSELLEKHGLEKPISFVKNTQSSSEEARKLMVRLTRHTGRKQPPVSESHWRTLLQDMLTMQQNVYTCLDSDACYEIFTESLLCSSRLENIHLAGQMMHCSACSENPPAGIAHKGKPHYRVSYEKSIDLVLAASREYFNSSTNLTDSCMDLARCCLQLITDRPPAIQEELDLIQAVGCLEEFGVKILPLQVRLCPDRISLIKECISQSPTCYKQSTKLLGLAELLRVAGENPEERRGQVLILLVEQALRFHDYKAASMHCQELMATGYPKSWDVCSQLGQSEGYQDLATRQELMAFALTHCPPSSIELLLAASSSLQTEILYQRVNFQIHHEGGENISASPLTSKAVQEDEVGVPGSNSADLLRWTTATTMKVLSNTTTTTKAVLQAVSDGQWWKKSLTYLRPLQGQKCGGAYQIGTTANEDLEKQGCHPFYESVISNPFVAESEGTYDTYQHVPVESFAEVLLRTGKLAEAKNKGEVFPTTEVLLQLASEALPNDMTLALAYLLALPQVLDANRCFEKQSPSALSLQLAAYYYSLQIYARLAPCFRDKCHPLYRADPKELIKMVTRHVTRHEHEAWPEDLISLTKQLHCYNERLLDFTQAQILQGLRKGVDVQRFTADDQYKRETILGLAETLEESVYSIAISLAQRYSVSRWEVFMTHLEFLFTDSGLSTLEIENRAQDLHLFETLKTDPEAFHQHMVKYIYPTIGGFDHERLQYYFTLLENCGCADLGNCAIKPETHIRLLKKFKVVASGLNYKKLTDENMSPLEALEPVLSSQNILSISKLVPKIPEKDGQMLSPSSLYTIWLQKLFWTGDPHLIKQVPGSSPEWLHAYDVCMKYFDRLHPGDLITVVDAVTFSPKAVTKLSVEARKEMTRKAIKTVKHFIEKPRKRNSEDEAQEAKDSKVTYADTLNHLEKSLAHLETLSHSFILSLKNSEQETLQKYSHLYDLSRSEKEKLHDEAVAICLDGQPLAMIQQLLEVAVGPLDISPKDIVQSAIMKIISALSGGSADLGGPRDPLKVLEGVVAAVHASVDKGEELVSPEDLLEWLRPFCADDAWPVRPRIHVLQILGQSFHLTEEDSKLLVFFRTEAILKASWPQRQVDIADIENEENRYCLFMELLESSHHEAEFQHLVLLLQAWPPMKSEYVITNNPWVRLATVMLTRCTMENKEGLGNEVLKMCRSLYNTKQMLPAEGVKELCLLLLNQSLLLPSLKLLLESRDEHLHEMALEQITAVTTVNDSNCDQELLSLLLDAKLLVKCVSTPFYPRIVDHLLASLQQGRWDAEELGRHLREAGHEAEAGSLLLAVRGTHQAFRTFSTALRAAQHWV</sequence>
<gene>
    <name evidence="21" type="primary">NBAS</name>
    <name evidence="19" type="synonym">NAG</name>
</gene>
<organism>
    <name type="scientific">Homo sapiens</name>
    <name type="common">Human</name>
    <dbReference type="NCBI Taxonomy" id="9606"/>
    <lineage>
        <taxon>Eukaryota</taxon>
        <taxon>Metazoa</taxon>
        <taxon>Chordata</taxon>
        <taxon>Craniata</taxon>
        <taxon>Vertebrata</taxon>
        <taxon>Euteleostomi</taxon>
        <taxon>Mammalia</taxon>
        <taxon>Eutheria</taxon>
        <taxon>Euarchontoglires</taxon>
        <taxon>Primates</taxon>
        <taxon>Haplorrhini</taxon>
        <taxon>Catarrhini</taxon>
        <taxon>Hominidae</taxon>
        <taxon>Homo</taxon>
    </lineage>
</organism>
<evidence type="ECO:0000250" key="1">
    <source>
        <dbReference type="UniProtKB" id="Q5TYW4"/>
    </source>
</evidence>
<evidence type="ECO:0000269" key="2">
    <source>
    </source>
</evidence>
<evidence type="ECO:0000269" key="3">
    <source>
    </source>
</evidence>
<evidence type="ECO:0000269" key="4">
    <source>
    </source>
</evidence>
<evidence type="ECO:0000269" key="5">
    <source>
    </source>
</evidence>
<evidence type="ECO:0000269" key="6">
    <source>
    </source>
</evidence>
<evidence type="ECO:0000269" key="7">
    <source>
    </source>
</evidence>
<evidence type="ECO:0000269" key="8">
    <source>
    </source>
</evidence>
<evidence type="ECO:0000269" key="9">
    <source>
    </source>
</evidence>
<evidence type="ECO:0000269" key="10">
    <source>
    </source>
</evidence>
<evidence type="ECO:0000269" key="11">
    <source>
    </source>
</evidence>
<evidence type="ECO:0000269" key="12">
    <source>
    </source>
</evidence>
<evidence type="ECO:0000269" key="13">
    <source>
    </source>
</evidence>
<evidence type="ECO:0000269" key="14">
    <source>
    </source>
</evidence>
<evidence type="ECO:0000269" key="15">
    <source>
    </source>
</evidence>
<evidence type="ECO:0000269" key="16">
    <source>
    </source>
</evidence>
<evidence type="ECO:0000303" key="17">
    <source>
    </source>
</evidence>
<evidence type="ECO:0000303" key="18">
    <source>
    </source>
</evidence>
<evidence type="ECO:0000303" key="19">
    <source>
    </source>
</evidence>
<evidence type="ECO:0000305" key="20"/>
<evidence type="ECO:0000312" key="21">
    <source>
        <dbReference type="HGNC" id="HGNC:15625"/>
    </source>
</evidence>
<evidence type="ECO:0007744" key="22">
    <source>
    </source>
</evidence>
<evidence type="ECO:0007744" key="23">
    <source>
    </source>
</evidence>
<evidence type="ECO:0007744" key="24">
    <source>
    </source>
</evidence>
<evidence type="ECO:0007744" key="25">
    <source>
    </source>
</evidence>
<evidence type="ECO:0007744" key="26">
    <source>
    </source>
</evidence>
<evidence type="ECO:0007744" key="27">
    <source>
    </source>
</evidence>
<reference key="1">
    <citation type="journal article" date="2003" name="Gene">
        <title>The neuroblastoma amplified gene, NAG: genomic structure and characterisation of the 7.3 kb transcript predominantly expressed in neuroblastoma.</title>
        <authorList>
            <person name="Scott D.K."/>
            <person name="Board J.R."/>
            <person name="Lu X."/>
            <person name="Pearson A.D.J."/>
            <person name="Kenyon R.M."/>
            <person name="Lunec J."/>
        </authorList>
    </citation>
    <scope>NUCLEOTIDE SEQUENCE [MRNA] (ISOFORM 1)</scope>
    <scope>VARIANT ARG-655</scope>
    <scope>TISSUE SPECIFICITY</scope>
    <source>
        <tissue>Neuroblastoma</tissue>
    </source>
</reference>
<reference key="2">
    <citation type="journal article" date="2005" name="Nature">
        <title>Generation and annotation of the DNA sequences of human chromosomes 2 and 4.</title>
        <authorList>
            <person name="Hillier L.W."/>
            <person name="Graves T.A."/>
            <person name="Fulton R.S."/>
            <person name="Fulton L.A."/>
            <person name="Pepin K.H."/>
            <person name="Minx P."/>
            <person name="Wagner-McPherson C."/>
            <person name="Layman D."/>
            <person name="Wylie K."/>
            <person name="Sekhon M."/>
            <person name="Becker M.C."/>
            <person name="Fewell G.A."/>
            <person name="Delehaunty K.D."/>
            <person name="Miner T.L."/>
            <person name="Nash W.E."/>
            <person name="Kremitzki C."/>
            <person name="Oddy L."/>
            <person name="Du H."/>
            <person name="Sun H."/>
            <person name="Bradshaw-Cordum H."/>
            <person name="Ali J."/>
            <person name="Carter J."/>
            <person name="Cordes M."/>
            <person name="Harris A."/>
            <person name="Isak A."/>
            <person name="van Brunt A."/>
            <person name="Nguyen C."/>
            <person name="Du F."/>
            <person name="Courtney L."/>
            <person name="Kalicki J."/>
            <person name="Ozersky P."/>
            <person name="Abbott S."/>
            <person name="Armstrong J."/>
            <person name="Belter E.A."/>
            <person name="Caruso L."/>
            <person name="Cedroni M."/>
            <person name="Cotton M."/>
            <person name="Davidson T."/>
            <person name="Desai A."/>
            <person name="Elliott G."/>
            <person name="Erb T."/>
            <person name="Fronick C."/>
            <person name="Gaige T."/>
            <person name="Haakenson W."/>
            <person name="Haglund K."/>
            <person name="Holmes A."/>
            <person name="Harkins R."/>
            <person name="Kim K."/>
            <person name="Kruchowski S.S."/>
            <person name="Strong C.M."/>
            <person name="Grewal N."/>
            <person name="Goyea E."/>
            <person name="Hou S."/>
            <person name="Levy A."/>
            <person name="Martinka S."/>
            <person name="Mead K."/>
            <person name="McLellan M.D."/>
            <person name="Meyer R."/>
            <person name="Randall-Maher J."/>
            <person name="Tomlinson C."/>
            <person name="Dauphin-Kohlberg S."/>
            <person name="Kozlowicz-Reilly A."/>
            <person name="Shah N."/>
            <person name="Swearengen-Shahid S."/>
            <person name="Snider J."/>
            <person name="Strong J.T."/>
            <person name="Thompson J."/>
            <person name="Yoakum M."/>
            <person name="Leonard S."/>
            <person name="Pearman C."/>
            <person name="Trani L."/>
            <person name="Radionenko M."/>
            <person name="Waligorski J.E."/>
            <person name="Wang C."/>
            <person name="Rock S.M."/>
            <person name="Tin-Wollam A.-M."/>
            <person name="Maupin R."/>
            <person name="Latreille P."/>
            <person name="Wendl M.C."/>
            <person name="Yang S.-P."/>
            <person name="Pohl C."/>
            <person name="Wallis J.W."/>
            <person name="Spieth J."/>
            <person name="Bieri T.A."/>
            <person name="Berkowicz N."/>
            <person name="Nelson J.O."/>
            <person name="Osborne J."/>
            <person name="Ding L."/>
            <person name="Meyer R."/>
            <person name="Sabo A."/>
            <person name="Shotland Y."/>
            <person name="Sinha P."/>
            <person name="Wohldmann P.E."/>
            <person name="Cook L.L."/>
            <person name="Hickenbotham M.T."/>
            <person name="Eldred J."/>
            <person name="Williams D."/>
            <person name="Jones T.A."/>
            <person name="She X."/>
            <person name="Ciccarelli F.D."/>
            <person name="Izaurralde E."/>
            <person name="Taylor J."/>
            <person name="Schmutz J."/>
            <person name="Myers R.M."/>
            <person name="Cox D.R."/>
            <person name="Huang X."/>
            <person name="McPherson J.D."/>
            <person name="Mardis E.R."/>
            <person name="Clifton S.W."/>
            <person name="Warren W.C."/>
            <person name="Chinwalla A.T."/>
            <person name="Eddy S.R."/>
            <person name="Marra M.A."/>
            <person name="Ovcharenko I."/>
            <person name="Furey T.S."/>
            <person name="Miller W."/>
            <person name="Eichler E.E."/>
            <person name="Bork P."/>
            <person name="Suyama M."/>
            <person name="Torrents D."/>
            <person name="Waterston R.H."/>
            <person name="Wilson R.K."/>
        </authorList>
    </citation>
    <scope>NUCLEOTIDE SEQUENCE [LARGE SCALE GENOMIC DNA]</scope>
    <scope>VARIANTS VAL-243 AND ARG-655</scope>
</reference>
<reference key="3">
    <citation type="journal article" date="2004" name="Genome Res.">
        <title>The status, quality, and expansion of the NIH full-length cDNA project: the Mammalian Gene Collection (MGC).</title>
        <authorList>
            <consortium name="The MGC Project Team"/>
        </authorList>
    </citation>
    <scope>NUCLEOTIDE SEQUENCE [LARGE SCALE MRNA] (ISOFORM 1)</scope>
    <scope>NUCLEOTIDE SEQUENCE [LARGE SCALE MRNA] OF 834-2371 (ISOFORM 2)</scope>
    <scope>VARIANT THR-2074</scope>
    <source>
        <tissue>Eye</tissue>
        <tissue>PNS</tissue>
    </source>
</reference>
<reference key="4">
    <citation type="journal article" date="1999" name="Oncogene">
        <title>Co-amplification of a novel gene, NAG, with the N-myc gene in neuroblastoma.</title>
        <authorList>
            <person name="Wimmer K."/>
            <person name="Zhu X.X."/>
            <person name="Lamb B.J."/>
            <person name="Kuick R."/>
            <person name="Ambros P.F."/>
            <person name="Kovar H."/>
            <person name="Thoraval D."/>
            <person name="Motyka S."/>
            <person name="Alberts J.R."/>
            <person name="Hanash S.M."/>
        </authorList>
    </citation>
    <scope>NUCLEOTIDE SEQUENCE [MRNA] OF 993-2371 (ISOFORMS 1/2)</scope>
    <scope>TISSUE SPECIFICITY</scope>
</reference>
<reference key="5">
    <citation type="journal article" date="2007" name="BMC Genomics">
        <title>The full-ORF clone resource of the German cDNA consortium.</title>
        <authorList>
            <person name="Bechtel S."/>
            <person name="Rosenfelder H."/>
            <person name="Duda A."/>
            <person name="Schmidt C.P."/>
            <person name="Ernst U."/>
            <person name="Wellenreuther R."/>
            <person name="Mehrle A."/>
            <person name="Schuster C."/>
            <person name="Bahr A."/>
            <person name="Bloecker H."/>
            <person name="Heubner D."/>
            <person name="Hoerlein A."/>
            <person name="Michel G."/>
            <person name="Wedler H."/>
            <person name="Koehrer K."/>
            <person name="Ottenwaelder B."/>
            <person name="Poustka A."/>
            <person name="Wiemann S."/>
            <person name="Schupp I."/>
        </authorList>
    </citation>
    <scope>NUCLEOTIDE SEQUENCE [LARGE SCALE MRNA] OF 1068-2371 (ISOFORMS 1/2)</scope>
    <source>
        <tissue>Uterus</tissue>
    </source>
</reference>
<reference key="6">
    <citation type="journal article" date="2000" name="J. Med. Genet.">
        <title>Gene amplification in PNETs/medulloblastomas: mapping of a novel amplified gene within the MYCN amplicon.</title>
        <authorList>
            <person name="Fruehwald M.C."/>
            <person name="O'Dorisio M.S."/>
            <person name="Rush L.J."/>
            <person name="Reiter J.L."/>
            <person name="Smiraglia D.J."/>
            <person name="Wenger G."/>
            <person name="Costello J.F."/>
            <person name="White P.S."/>
            <person name="Krahe R."/>
            <person name="Brodeur G.M."/>
            <person name="Plass C."/>
        </authorList>
    </citation>
    <scope>TISSUE SPECIFICITY</scope>
</reference>
<reference key="7">
    <citation type="journal article" date="2008" name="Proc. Natl. Acad. Sci. U.S.A.">
        <title>A quantitative atlas of mitotic phosphorylation.</title>
        <authorList>
            <person name="Dephoure N."/>
            <person name="Zhou C."/>
            <person name="Villen J."/>
            <person name="Beausoleil S.A."/>
            <person name="Bakalarski C.E."/>
            <person name="Elledge S.J."/>
            <person name="Gygi S.P."/>
        </authorList>
    </citation>
    <scope>PHOSPHORYLATION [LARGE SCALE ANALYSIS] AT SER-473 AND SER-475</scope>
    <scope>IDENTIFICATION BY MASS SPECTROMETRY [LARGE SCALE ANALYSIS]</scope>
    <source>
        <tissue>Cervix carcinoma</tissue>
    </source>
</reference>
<reference key="8">
    <citation type="journal article" date="2008" name="Proteomics">
        <title>Large-scale phosphoproteome analysis of human liver tissue by enrichment and fractionation of phosphopeptides with strong anion exchange chromatography.</title>
        <authorList>
            <person name="Han G."/>
            <person name="Ye M."/>
            <person name="Zhou H."/>
            <person name="Jiang X."/>
            <person name="Feng S."/>
            <person name="Jiang X."/>
            <person name="Tian R."/>
            <person name="Wan D."/>
            <person name="Zou H."/>
            <person name="Gu J."/>
        </authorList>
    </citation>
    <scope>IDENTIFICATION BY MASS SPECTROMETRY [LARGE SCALE ANALYSIS]</scope>
    <source>
        <tissue>Liver</tissue>
    </source>
</reference>
<reference key="9">
    <citation type="journal article" date="2009" name="Anal. Chem.">
        <title>Lys-N and trypsin cover complementary parts of the phosphoproteome in a refined SCX-based approach.</title>
        <authorList>
            <person name="Gauci S."/>
            <person name="Helbig A.O."/>
            <person name="Slijper M."/>
            <person name="Krijgsveld J."/>
            <person name="Heck A.J."/>
            <person name="Mohammed S."/>
        </authorList>
    </citation>
    <scope>IDENTIFICATION BY MASS SPECTROMETRY [LARGE SCALE ANALYSIS]</scope>
</reference>
<reference key="10">
    <citation type="journal article" date="2009" name="Mol. Biol. Cell">
        <title>Identification of the neuroblastoma-amplified gene product as a component of the syntaxin 18 complex implicated in Golgi-to-endoplasmic reticulum retrograde transport.</title>
        <authorList>
            <person name="Aoki T."/>
            <person name="Ichimura S."/>
            <person name="Itoh A."/>
            <person name="Kuramoto M."/>
            <person name="Shinkawa T."/>
            <person name="Isobe T."/>
            <person name="Tagaya M."/>
        </authorList>
    </citation>
    <scope>FUNCTION</scope>
    <scope>SUBUNIT</scope>
    <scope>INTERACTION WITH USE1</scope>
    <scope>SUBCELLULAR LOCATION</scope>
</reference>
<reference key="11">
    <citation type="journal article" date="2009" name="Sci. Signal.">
        <title>Quantitative phosphoproteomic analysis of T cell receptor signaling reveals system-wide modulation of protein-protein interactions.</title>
        <authorList>
            <person name="Mayya V."/>
            <person name="Lundgren D.H."/>
            <person name="Hwang S.-I."/>
            <person name="Rezaul K."/>
            <person name="Wu L."/>
            <person name="Eng J.K."/>
            <person name="Rodionov V."/>
            <person name="Han D.K."/>
        </authorList>
    </citation>
    <scope>PHOSPHORYLATION [LARGE SCALE ANALYSIS] AT SER-473 AND SER-475</scope>
    <scope>IDENTIFICATION BY MASS SPECTROMETRY [LARGE SCALE ANALYSIS]</scope>
    <source>
        <tissue>Leukemic T-cell</tissue>
    </source>
</reference>
<reference key="12">
    <citation type="journal article" date="2009" name="Science">
        <title>Lysine acetylation targets protein complexes and co-regulates major cellular functions.</title>
        <authorList>
            <person name="Choudhary C."/>
            <person name="Kumar C."/>
            <person name="Gnad F."/>
            <person name="Nielsen M.L."/>
            <person name="Rehman M."/>
            <person name="Walther T.C."/>
            <person name="Olsen J.V."/>
            <person name="Mann M."/>
        </authorList>
    </citation>
    <scope>ACETYLATION [LARGE SCALE ANALYSIS] AT LYS-1057</scope>
    <scope>IDENTIFICATION BY MASS SPECTROMETRY [LARGE SCALE ANALYSIS]</scope>
</reference>
<reference key="13">
    <citation type="journal article" date="2010" name="J. Med. Genet.">
        <title>Neuroblastoma amplified sequence gene is associated with a novel short stature syndrome characterised by optic nerve atrophy and Pelger-Huet anomaly.</title>
        <authorList>
            <person name="Maksimova N."/>
            <person name="Hara K."/>
            <person name="Nikolaeva I."/>
            <person name="Chun-Feng T."/>
            <person name="Usui T."/>
            <person name="Takagi M."/>
            <person name="Nishihira Y."/>
            <person name="Miyashita A."/>
            <person name="Fujiwara H."/>
            <person name="Oyama T."/>
            <person name="Nogovicina A."/>
            <person name="Sukhomyasova A."/>
            <person name="Potapova S."/>
            <person name="Kuwano R."/>
            <person name="Takahashi H."/>
            <person name="Nishizawa M."/>
            <person name="Onodera O."/>
        </authorList>
    </citation>
    <scope>SUBCELLULAR LOCATION</scope>
    <scope>TISSUE SPECIFICITY</scope>
    <scope>VARIANT SOPH HIS-1914</scope>
    <scope>VARIANTS GLU-44; LEU-949 AND SER-1009</scope>
</reference>
<reference key="14">
    <citation type="journal article" date="2010" name="Structure">
        <title>Structural analysis of the RZZ complex reveals common ancestry with multisubunit vesicle tethering machinery.</title>
        <authorList>
            <person name="Civril F."/>
            <person name="Wehenkel A."/>
            <person name="Giorgi F.M."/>
            <person name="Santaguida S."/>
            <person name="Di Fonzo A."/>
            <person name="Grigorean G."/>
            <person name="Ciccarelli F.D."/>
            <person name="Musacchio A."/>
        </authorList>
    </citation>
    <scope>INTERACTION WITH ZW10</scope>
    <scope>IDENTIFICATION IN THE NRZ COMPLEX</scope>
</reference>
<reference key="15">
    <citation type="journal article" date="2011" name="BMC Syst. Biol.">
        <title>Initial characterization of the human central proteome.</title>
        <authorList>
            <person name="Burkard T.R."/>
            <person name="Planyavsky M."/>
            <person name="Kaupe I."/>
            <person name="Breitwieser F.P."/>
            <person name="Buerckstuemmer T."/>
            <person name="Bennett K.L."/>
            <person name="Superti-Furga G."/>
            <person name="Colinge J."/>
        </authorList>
    </citation>
    <scope>IDENTIFICATION BY MASS SPECTROMETRY [LARGE SCALE ANALYSIS]</scope>
</reference>
<reference key="16">
    <citation type="journal article" date="2011" name="Sci. Signal.">
        <title>System-wide temporal characterization of the proteome and phosphoproteome of human embryonic stem cell differentiation.</title>
        <authorList>
            <person name="Rigbolt K.T."/>
            <person name="Prokhorova T.A."/>
            <person name="Akimov V."/>
            <person name="Henningsen J."/>
            <person name="Johansen P.T."/>
            <person name="Kratchmarova I."/>
            <person name="Kassem M."/>
            <person name="Mann M."/>
            <person name="Olsen J.V."/>
            <person name="Blagoev B."/>
        </authorList>
    </citation>
    <scope>PHOSPHORYLATION [LARGE SCALE ANALYSIS] AT SER-473 AND SER-475</scope>
    <scope>IDENTIFICATION BY MASS SPECTROMETRY [LARGE SCALE ANALYSIS]</scope>
</reference>
<reference key="17">
    <citation type="journal article" date="2013" name="J. Proteome Res.">
        <title>Toward a comprehensive characterization of a human cancer cell phosphoproteome.</title>
        <authorList>
            <person name="Zhou H."/>
            <person name="Di Palma S."/>
            <person name="Preisinger C."/>
            <person name="Peng M."/>
            <person name="Polat A.N."/>
            <person name="Heck A.J."/>
            <person name="Mohammed S."/>
        </authorList>
    </citation>
    <scope>PHOSPHORYLATION [LARGE SCALE ANALYSIS] AT SER-473</scope>
    <scope>IDENTIFICATION BY MASS SPECTROMETRY [LARGE SCALE ANALYSIS]</scope>
    <source>
        <tissue>Erythroleukemia</tissue>
    </source>
</reference>
<reference key="18">
    <citation type="journal article" date="2014" name="J. Proteomics">
        <title>An enzyme assisted RP-RPLC approach for in-depth analysis of human liver phosphoproteome.</title>
        <authorList>
            <person name="Bian Y."/>
            <person name="Song C."/>
            <person name="Cheng K."/>
            <person name="Dong M."/>
            <person name="Wang F."/>
            <person name="Huang J."/>
            <person name="Sun D."/>
            <person name="Wang L."/>
            <person name="Ye M."/>
            <person name="Zou H."/>
        </authorList>
    </citation>
    <scope>PHOSPHORYLATION [LARGE SCALE ANALYSIS] AT SER-473 AND SER-475</scope>
    <scope>IDENTIFICATION BY MASS SPECTROMETRY [LARGE SCALE ANALYSIS]</scope>
    <source>
        <tissue>Liver</tissue>
    </source>
</reference>
<reference key="19">
    <citation type="journal article" date="2015" name="Am. J. Hum. Genet.">
        <title>Biallelic mutations in NBAS cause recurrent acute liver failure with onset in infancy.</title>
        <authorList>
            <person name="Haack T.B."/>
            <person name="Staufner C."/>
            <person name="Koepke M.G."/>
            <person name="Straub B.K."/>
            <person name="Koelker S."/>
            <person name="Thiel C."/>
            <person name="Freisinger P."/>
            <person name="Baric I."/>
            <person name="McKiernan P.J."/>
            <person name="Dikow N."/>
            <person name="Harting I."/>
            <person name="Beisse F."/>
            <person name="Burgard P."/>
            <person name="Kotzaeridou U."/>
            <person name="Kuehr J."/>
            <person name="Himbert U."/>
            <person name="Taylor R.W."/>
            <person name="Distelmaier F."/>
            <person name="Vockley J."/>
            <person name="Ghaloul-Gonzalez L."/>
            <person name="Zschocke J."/>
            <person name="Kremer L.S."/>
            <person name="Graf E."/>
            <person name="Schwarzmayr T."/>
            <person name="Bader D.M."/>
            <person name="Gagneur J."/>
            <person name="Wieland T."/>
            <person name="Terrile C."/>
            <person name="Strom T.M."/>
            <person name="Meitinger T."/>
            <person name="Hoffmann G.F."/>
            <person name="Prokisch H."/>
        </authorList>
    </citation>
    <scope>INVOLVEMENT IN ILFS2</scope>
    <scope>VARIANTS ILFS2 ILE-187 DEL; LEU-202 DEL; SER-348; HIS-777; PHE-842; ARG-903; SER-984 AND PRO-1055</scope>
</reference>
<reference key="20">
    <citation type="journal article" date="2015" name="Am. J. Med. Genet. A">
        <title>NBAS mutations cause a multisystem disorder involving bone, connective tissue, liver, immune system, and retina.</title>
        <authorList>
            <person name="Garcia Segarra N."/>
            <person name="Ballhausen D."/>
            <person name="Crawford H."/>
            <person name="Perreau M."/>
            <person name="Campos-Xavier B."/>
            <person name="van Spaendonck-Zwarts K."/>
            <person name="Vermeer C."/>
            <person name="Russo M."/>
            <person name="Zambelli P.Y."/>
            <person name="Stevenson B."/>
            <person name="Royer-Bertrand B."/>
            <person name="Rivolta C."/>
            <person name="Candotti F."/>
            <person name="Unger S."/>
            <person name="Munier F.L."/>
            <person name="Superti-Furga A."/>
            <person name="Bonafe L."/>
        </authorList>
    </citation>
    <scope>INVOLVEMENT IN MULTISYSTEM DISEASE</scope>
    <scope>VARIANTS VAL-95; TRP-137 AND ARG-396</scope>
</reference>
<reference key="21">
    <citation type="journal article" date="2017" name="BMC Gastroenterol.">
        <title>Novel NBAS mutations and fever-related recurrent acute liver failure in Chinese children: a retrospective study.</title>
        <authorList>
            <person name="Li J.Q."/>
            <person name="Qiu Y.L."/>
            <person name="Gong J.Y."/>
            <person name="Dou L.M."/>
            <person name="Lu Y."/>
            <person name="Knisely A.S."/>
            <person name="Zhang M.H."/>
            <person name="Luan W.S."/>
            <person name="Wang J.S."/>
        </authorList>
    </citation>
    <scope>VARIANTS ILFS2 196-GLN--VAL-2371 DEL; LYS-803 AND TYR-1199</scope>
</reference>
<reference key="22">
    <citation type="journal article" date="2017" name="Bone">
        <title>Compound heterozygous variants in NBAS as a cause of atypical osteogenesis imperfecta.</title>
        <authorList>
            <consortium name="DDD Study"/>
            <person name="Balasubramanian M."/>
            <person name="Hurst J."/>
            <person name="Brown S."/>
            <person name="Bishop N.J."/>
            <person name="Arundel P."/>
            <person name="DeVile C."/>
            <person name="Pollitt R.C."/>
            <person name="Crooks L."/>
            <person name="Longman D."/>
            <person name="Caceres J.F."/>
            <person name="Shackley F."/>
            <person name="Connolly S."/>
            <person name="Payne J.H."/>
            <person name="Offiah A.C."/>
            <person name="Hughes D."/>
            <person name="Parker M.J."/>
            <person name="Hide W."/>
            <person name="Skerry T.M."/>
        </authorList>
    </citation>
    <scope>VARIANTS 678-GLU--VAL-2371 DEL; 1004-ARG--VAL-2371 DEL AND HIS-1914</scope>
    <scope>CHARACTERIZATION OF VARIANTS 678-GLU--VAL-2371 DEL; 1004-ARG--VAL-2371 AND HIS-1914</scope>
</reference>
<reference key="23">
    <citation type="journal article" date="2017" name="Eur. J. Med. Genet.">
        <title>Recurrent elevated liver transaminases and acute liver failure in two siblings with novel bi-allelic mutations of NBAS.</title>
        <authorList>
            <person name="Regateiro F.S."/>
            <person name="Belkaya S."/>
            <person name="Neves N."/>
            <person name="Ferreira S."/>
            <person name="Silvestre P."/>
            <person name="Lemos S."/>
            <person name="Venancio M."/>
            <person name="Casanova J.L."/>
            <person name="Goncalves I."/>
            <person name="Jouanguy E."/>
            <person name="Diogo L."/>
        </authorList>
    </citation>
    <scope>VARIANTS ILFS2 PRO-227 AND 583-TRP--VAL-2371 DEL</scope>
</reference>
<reference key="24">
    <citation type="journal article" date="2019" name="Hum. Mutat.">
        <title>NBAS pathogenic variants: Defining the associated clinical and facial phenotype and genotype-phenotype correlations.</title>
        <authorList>
            <person name="Carli D."/>
            <person name="Giorgio E."/>
            <person name="Pantaleoni F."/>
            <person name="Bruselles A."/>
            <person name="Barresi S."/>
            <person name="Riberi E."/>
            <person name="Licciardi F."/>
            <person name="Gazzin A."/>
            <person name="Baldassarre G."/>
            <person name="Pizzi S."/>
            <person name="Niceta M."/>
            <person name="Radio F.C."/>
            <person name="Molinatto C."/>
            <person name="Montin D."/>
            <person name="Calvo P.L."/>
            <person name="Ciolfi A."/>
            <person name="Fleischer N."/>
            <person name="Ferrero G.B."/>
            <person name="Brusco A."/>
            <person name="Tartaglia M."/>
        </authorList>
    </citation>
    <scope>VARIANT 501-ARG--VAL-2371 DEL</scope>
</reference>
<reference key="25">
    <citation type="journal article" date="2020" name="Arch. Pediatr.">
        <title>Mutations in NBAS and SCYL1, genetic causes of recurrent liver failure in children: Three case reports and a literature review.</title>
        <authorList>
            <person name="Chavany J."/>
            <person name="Cano A."/>
            <person name="Roquelaure B."/>
            <person name="Bourgeois P."/>
            <person name="Boubnova J."/>
            <person name="Gaignard P."/>
            <person name="Hoebeke C."/>
            <person name="Reynaud R."/>
            <person name="Rhomer B."/>
            <person name="Slama A."/>
            <person name="Badens C."/>
            <person name="Chabrol B."/>
            <person name="Fabre A."/>
        </authorList>
    </citation>
    <scope>VARIANTS ILFS2 ARG-903 AND HIS-941</scope>
</reference>
<proteinExistence type="evidence at protein level"/>
<accession>A2RRP1</accession>
<accession>O95790</accession>
<accession>Q2VPJ7</accession>
<accession>Q53TK6</accession>
<accession>Q86V39</accession>
<accession>Q8NFY8</accession>
<accession>Q9Y3W5</accession>
<comment type="function">
    <text evidence="1 6">Involved in Golgi-to-endoplasmic reticulum (ER) retrograde transport; the function is proposed to depend on its association in the NRZ complex which is believed to play a role in SNARE assembly at the ER (PubMed:19369418). Required for normal embryonic development (By similarity). May play a role in the nonsense-mediated decay pathway of mRNAs containing premature stop codons (By similarity).</text>
</comment>
<comment type="subunit">
    <text evidence="6 7">Component of the NRZ complex composed of NBAS, ZW10 and RINT1/TIP20L; NRZ associates with SNAREs STX18, USE1, BNIP1/SEC20L and SEC22B (the assembly has been described as syntaxin 18 complex); links NRZ to SNARE USE1 (PubMed:19369418).</text>
</comment>
<comment type="subcellular location">
    <subcellularLocation>
        <location evidence="8">Cytoplasm</location>
    </subcellularLocation>
    <subcellularLocation>
        <location evidence="6">Endoplasmic reticulum</location>
    </subcellularLocation>
    <subcellularLocation>
        <location>Endoplasmic reticulum membrane</location>
        <topology evidence="20">Peripheral membrane protein</topology>
    </subcellularLocation>
</comment>
<comment type="alternative products">
    <event type="alternative splicing"/>
    <isoform>
        <id>A2RRP1-1</id>
        <name>1</name>
        <sequence type="displayed"/>
    </isoform>
    <isoform>
        <id>A2RRP1-2</id>
        <name>2</name>
        <sequence type="described" ref="VSP_026445"/>
    </isoform>
</comment>
<comment type="tissue specificity">
    <text evidence="2 3 8 16">Broadly expressed, with highest levels in heart and skeletal muscle, and lowest levels in liver, small intestine and thymus. Well expressed in retinal ganglion cells, epidermal skin cells, and leukocytes. Up-regulated together with N-myc in some neuroblastoma cell lines.</text>
</comment>
<comment type="disease" evidence="8">
    <disease id="DI-03531">
        <name>Short stature, optic nerve atrophy, and Pelger-Huet anomaly</name>
        <acronym>SOPH</acronym>
        <description>An autosomal recessive syndrome characterized by severe postnatal growth retardation, facial dysmorphism with senile face, small hands and feet, normal intelligence, abnormal nuclear shape in neutrophil granulocytes (Pelger-Huet anomaly), and optic atrophy with loss of visual acuity and color vision.</description>
        <dbReference type="MIM" id="614800"/>
    </disease>
    <text>The disease is caused by variants affecting the gene represented in this entry.</text>
</comment>
<comment type="disease" evidence="9 12 13 15">
    <disease id="DI-04550">
        <name>Infantile liver failure syndrome 2</name>
        <acronym>ILFS2</acronym>
        <description>A form of infantile liver failure syndrome, a life-threatening disorder of hepatic function that manifests with acute liver failure in the first few months of life. Clinical features include anemia, renal tubulopathy, developmental delay, seizures, failure to thrive, and liver steatosis and fibrosis.</description>
        <dbReference type="MIM" id="616483"/>
    </disease>
    <text>The disease is caused by variants affecting the gene represented in this entry.</text>
</comment>
<comment type="disease">
    <text evidence="10 11 14">NBAS mutations have been found in a multisystem disease affecting the liver, eye, immune system, connective tissue, and bone. Clinical manifestations include a progeroid appearance, short stature, slender bones, epiphyseal dysplasia with multiple phalangeal pseudo-epiphyses, cervical instability, myelopathy, elevated transaminases, hypogammaglobulinemia, reduced natural killer cells, Pelger-Huet anomaly of granulocytes, and in some cases retinal dystrophy and optic atrophy.</text>
</comment>
<comment type="sequence caution" evidence="20">
    <conflict type="erroneous initiation">
        <sequence resource="EMBL-CDS" id="AAD18133"/>
    </conflict>
    <text>Truncated N-terminus.</text>
</comment>
<comment type="sequence caution" evidence="20">
    <conflict type="erroneous termination">
        <sequence resource="EMBL-CDS" id="AAD18133"/>
    </conflict>
    <text>Extended C-terminus.</text>
</comment>
<comment type="sequence caution" evidence="20">
    <conflict type="erroneous initiation">
        <sequence resource="EMBL-CDS" id="CAB43382"/>
    </conflict>
    <text>Truncated N-terminus.</text>
</comment>
<protein>
    <recommendedName>
        <fullName evidence="21">NBAS subunit of NRZ tethering complex</fullName>
    </recommendedName>
    <alternativeName>
        <fullName evidence="19">Neuroblastoma-amplified gene protein</fullName>
    </alternativeName>
    <alternativeName>
        <fullName evidence="17">Neuroblastoma-amplified sequence</fullName>
    </alternativeName>
</protein>